<name>MASTR_MOUSE</name>
<reference key="1">
    <citation type="journal article" date="2006" name="Mol. Cell">
        <title>Coactivation of MEF2 by the SAP domain proteins myocardin and MASTR.</title>
        <authorList>
            <person name="Creemers E.E."/>
            <person name="Sutherland L.B."/>
            <person name="Oh J."/>
            <person name="Barbosa A.C."/>
            <person name="Olson E.N."/>
        </authorList>
    </citation>
    <scope>NUCLEOTIDE SEQUENCE [MRNA] (ISOFORM 1)</scope>
    <scope>FUNCTION</scope>
    <scope>SUBCELLULAR LOCATION</scope>
    <scope>SUBUNIT</scope>
    <scope>TISSUE SPECIFICITY</scope>
</reference>
<reference key="2">
    <citation type="journal article" date="2009" name="PLoS Biol.">
        <title>Lineage-specific biology revealed by a finished genome assembly of the mouse.</title>
        <authorList>
            <person name="Church D.M."/>
            <person name="Goodstadt L."/>
            <person name="Hillier L.W."/>
            <person name="Zody M.C."/>
            <person name="Goldstein S."/>
            <person name="She X."/>
            <person name="Bult C.J."/>
            <person name="Agarwala R."/>
            <person name="Cherry J.L."/>
            <person name="DiCuccio M."/>
            <person name="Hlavina W."/>
            <person name="Kapustin Y."/>
            <person name="Meric P."/>
            <person name="Maglott D."/>
            <person name="Birtle Z."/>
            <person name="Marques A.C."/>
            <person name="Graves T."/>
            <person name="Zhou S."/>
            <person name="Teague B."/>
            <person name="Potamousis K."/>
            <person name="Churas C."/>
            <person name="Place M."/>
            <person name="Herschleb J."/>
            <person name="Runnheim R."/>
            <person name="Forrest D."/>
            <person name="Amos-Landgraf J."/>
            <person name="Schwartz D.C."/>
            <person name="Cheng Z."/>
            <person name="Lindblad-Toh K."/>
            <person name="Eichler E.E."/>
            <person name="Ponting C.P."/>
        </authorList>
    </citation>
    <scope>NUCLEOTIDE SEQUENCE [LARGE SCALE GENOMIC DNA]</scope>
    <source>
        <strain>C57BL/6J</strain>
    </source>
</reference>
<reference key="3">
    <citation type="journal article" date="2004" name="Genome Res.">
        <title>The status, quality, and expansion of the NIH full-length cDNA project: the Mammalian Gene Collection (MGC).</title>
        <authorList>
            <consortium name="The MGC Project Team"/>
        </authorList>
    </citation>
    <scope>NUCLEOTIDE SEQUENCE [LARGE SCALE MRNA] OF 1-348 (ISOFORM 2)</scope>
</reference>
<feature type="chain" id="PRO_0000319982" description="MEF2-activating motif and SAP domain-containing transcriptional regulator">
    <location>
        <begin position="1"/>
        <end position="421"/>
    </location>
</feature>
<feature type="domain" description="SAP" evidence="2">
    <location>
        <begin position="165"/>
        <end position="199"/>
    </location>
</feature>
<feature type="region of interest" description="Disordered" evidence="3">
    <location>
        <begin position="104"/>
        <end position="156"/>
    </location>
</feature>
<feature type="region of interest" description="Disordered" evidence="3">
    <location>
        <begin position="188"/>
        <end position="296"/>
    </location>
</feature>
<feature type="region of interest" description="Transcription activation">
    <location>
        <begin position="208"/>
        <end position="421"/>
    </location>
</feature>
<feature type="region of interest" description="Disordered" evidence="3">
    <location>
        <begin position="322"/>
        <end position="406"/>
    </location>
</feature>
<feature type="short sequence motif" description="MEF2-binding" evidence="1">
    <location>
        <begin position="12"/>
        <end position="28"/>
    </location>
</feature>
<feature type="compositionally biased region" description="Basic and acidic residues" evidence="3">
    <location>
        <begin position="191"/>
        <end position="214"/>
    </location>
</feature>
<feature type="compositionally biased region" description="Polar residues" evidence="3">
    <location>
        <begin position="230"/>
        <end position="241"/>
    </location>
</feature>
<feature type="compositionally biased region" description="Pro residues" evidence="3">
    <location>
        <begin position="260"/>
        <end position="292"/>
    </location>
</feature>
<feature type="compositionally biased region" description="Low complexity" evidence="3">
    <location>
        <begin position="347"/>
        <end position="372"/>
    </location>
</feature>
<feature type="splice variant" id="VSP_031556" description="In isoform 2." evidence="5">
    <location>
        <begin position="1"/>
        <end position="135"/>
    </location>
</feature>
<feature type="splice variant" id="VSP_031557" description="In isoform 2." evidence="5">
    <original>RPHP</original>
    <variation>MPVA</variation>
    <location>
        <begin position="136"/>
        <end position="139"/>
    </location>
</feature>
<feature type="sequence conflict" description="In Ref. 1; ABF85692." evidence="6" ref="1">
    <original>T</original>
    <variation>P</variation>
    <location>
        <position position="53"/>
    </location>
</feature>
<feature type="sequence conflict" description="In Ref. 1; ABF85692." evidence="6" ref="1">
    <original>S</original>
    <variation>P</variation>
    <location>
        <position position="66"/>
    </location>
</feature>
<feature type="sequence conflict" description="In Ref. 1; ABF85692." evidence="6" ref="1">
    <original>K</original>
    <variation>R</variation>
    <location>
        <position position="142"/>
    </location>
</feature>
<feature type="sequence conflict" description="In Ref. 3; AAI27229/AAI27228." evidence="6" ref="3">
    <original>P</original>
    <variation>R</variation>
    <location>
        <position position="348"/>
    </location>
</feature>
<sequence>MTLAASSQRSQIIRSKFRSVLQLRIHRRNQDCTSDSDPWISASGPALAPALPTVPASFLVSPGVLSPEPAYCPWRAPKKESPKNSQHWKEPKVRGNLTYHLYMPPEQRQGPRANLQVERSTLGPPDPPLWEKNSQRPHPRMKPSSAGVSSPSPPSHKLELQTLKLEELTVSELRQQLRLRGLPVSGTKAMLLERMRGGTPPRERPKPRREDKEAAAPWPRLKPKALGTTRLPSTVKASATNRRLKFSGATDPLGAAPAPASVPAPTPSPALAPTPTPAPVPAPAPAPFPTPPASLTLEEELQEAIRRAQLLPNRNIDDILEDQVEPDDLLPPVPLDFPGSFDLLSPSPDSEGFSSVFSSSLPSPTSSLSPSPRALTDSLDWLEALSGGPPLGSGPPGPSIFSADLSDPSGSLLWELLPDPW</sequence>
<protein>
    <recommendedName>
        <fullName>MEF2-activating motif and SAP domain-containing transcriptional regulator</fullName>
    </recommendedName>
    <alternativeName>
        <fullName>MEF2-activating SAP transcriptional regulatory protein</fullName>
    </alternativeName>
</protein>
<keyword id="KW-0010">Activator</keyword>
<keyword id="KW-0025">Alternative splicing</keyword>
<keyword id="KW-0539">Nucleus</keyword>
<keyword id="KW-1185">Reference proteome</keyword>
<keyword id="KW-0804">Transcription</keyword>
<keyword id="KW-0805">Transcription regulation</keyword>
<gene>
    <name type="primary">Mamstr</name>
    <name type="synonym">Mastr</name>
</gene>
<organism>
    <name type="scientific">Mus musculus</name>
    <name type="common">Mouse</name>
    <dbReference type="NCBI Taxonomy" id="10090"/>
    <lineage>
        <taxon>Eukaryota</taxon>
        <taxon>Metazoa</taxon>
        <taxon>Chordata</taxon>
        <taxon>Craniata</taxon>
        <taxon>Vertebrata</taxon>
        <taxon>Euteleostomi</taxon>
        <taxon>Mammalia</taxon>
        <taxon>Eutheria</taxon>
        <taxon>Euarchontoglires</taxon>
        <taxon>Glires</taxon>
        <taxon>Rodentia</taxon>
        <taxon>Myomorpha</taxon>
        <taxon>Muroidea</taxon>
        <taxon>Muridae</taxon>
        <taxon>Murinae</taxon>
        <taxon>Mus</taxon>
        <taxon>Mus</taxon>
    </lineage>
</organism>
<accession>Q0ZCJ7</accession>
<accession>A1L0X1</accession>
<accession>E9QM68</accession>
<accession>Q3B818</accession>
<proteinExistence type="evidence at protein level"/>
<dbReference type="EMBL" id="DQ534901">
    <property type="protein sequence ID" value="ABF85692.1"/>
    <property type="molecule type" value="mRNA"/>
</dbReference>
<dbReference type="EMBL" id="AC149057">
    <property type="status" value="NOT_ANNOTATED_CDS"/>
    <property type="molecule type" value="Genomic_DNA"/>
</dbReference>
<dbReference type="EMBL" id="BC107175">
    <property type="protein sequence ID" value="AAI07176.1"/>
    <property type="molecule type" value="mRNA"/>
</dbReference>
<dbReference type="EMBL" id="BC107176">
    <property type="protein sequence ID" value="AAI07177.1"/>
    <property type="molecule type" value="mRNA"/>
</dbReference>
<dbReference type="EMBL" id="BC119481">
    <property type="protein sequence ID" value="AAI19482.1"/>
    <property type="molecule type" value="mRNA"/>
</dbReference>
<dbReference type="EMBL" id="BC119482">
    <property type="protein sequence ID" value="AAI19483.1"/>
    <property type="molecule type" value="mRNA"/>
</dbReference>
<dbReference type="EMBL" id="BC127227">
    <property type="protein sequence ID" value="AAI27228.1"/>
    <property type="molecule type" value="mRNA"/>
</dbReference>
<dbReference type="EMBL" id="BC127228">
    <property type="protein sequence ID" value="AAI27229.1"/>
    <property type="molecule type" value="mRNA"/>
</dbReference>
<dbReference type="CCDS" id="CCDS21257.2">
    <molecule id="Q0ZCJ7-1"/>
</dbReference>
<dbReference type="RefSeq" id="NP_766006.2">
    <molecule id="Q0ZCJ7-1"/>
    <property type="nucleotide sequence ID" value="NM_172418.2"/>
</dbReference>
<dbReference type="RefSeq" id="XP_006541297.1">
    <molecule id="Q0ZCJ7-1"/>
    <property type="nucleotide sequence ID" value="XM_006541234.3"/>
</dbReference>
<dbReference type="SMR" id="Q0ZCJ7"/>
<dbReference type="FunCoup" id="Q0ZCJ7">
    <property type="interactions" value="775"/>
</dbReference>
<dbReference type="STRING" id="10090.ENSMUSP00000114686"/>
<dbReference type="GlyGen" id="Q0ZCJ7">
    <property type="glycosylation" value="4 sites"/>
</dbReference>
<dbReference type="PhosphoSitePlus" id="Q0ZCJ7"/>
<dbReference type="PaxDb" id="10090-ENSMUSP00000114686"/>
<dbReference type="Antibodypedia" id="45786">
    <property type="antibodies" value="79 antibodies from 13 providers"/>
</dbReference>
<dbReference type="Ensembl" id="ENSMUST00000148532.4">
    <molecule id="Q0ZCJ7-1"/>
    <property type="protein sequence ID" value="ENSMUSP00000114686.2"/>
    <property type="gene ID" value="ENSMUSG00000042918.18"/>
</dbReference>
<dbReference type="GeneID" id="74490"/>
<dbReference type="KEGG" id="mmu:74490"/>
<dbReference type="UCSC" id="uc009gwk.2">
    <molecule id="Q0ZCJ7-1"/>
    <property type="organism name" value="mouse"/>
</dbReference>
<dbReference type="AGR" id="MGI:1921740"/>
<dbReference type="CTD" id="284358"/>
<dbReference type="MGI" id="MGI:1921740">
    <property type="gene designation" value="Mamstr"/>
</dbReference>
<dbReference type="VEuPathDB" id="HostDB:ENSMUSG00000042918"/>
<dbReference type="eggNOG" id="ENOG502RJE6">
    <property type="taxonomic scope" value="Eukaryota"/>
</dbReference>
<dbReference type="GeneTree" id="ENSGT00940000154181"/>
<dbReference type="HOGENOM" id="CLU_055830_0_0_1"/>
<dbReference type="InParanoid" id="Q0ZCJ7"/>
<dbReference type="OMA" id="PKISQHW"/>
<dbReference type="OrthoDB" id="197676at2759"/>
<dbReference type="PhylomeDB" id="Q0ZCJ7"/>
<dbReference type="BioGRID-ORCS" id="74490">
    <property type="hits" value="1 hit in 76 CRISPR screens"/>
</dbReference>
<dbReference type="PRO" id="PR:Q0ZCJ7"/>
<dbReference type="Proteomes" id="UP000000589">
    <property type="component" value="Chromosome 7"/>
</dbReference>
<dbReference type="RNAct" id="Q0ZCJ7">
    <property type="molecule type" value="protein"/>
</dbReference>
<dbReference type="Bgee" id="ENSMUSG00000042918">
    <property type="expression patterns" value="Expressed in hindlimb stylopod muscle and 113 other cell types or tissues"/>
</dbReference>
<dbReference type="ExpressionAtlas" id="Q0ZCJ7">
    <property type="expression patterns" value="baseline and differential"/>
</dbReference>
<dbReference type="GO" id="GO:0005634">
    <property type="term" value="C:nucleus"/>
    <property type="evidence" value="ECO:0000314"/>
    <property type="project" value="MGI"/>
</dbReference>
<dbReference type="GO" id="GO:0010831">
    <property type="term" value="P:positive regulation of myotube differentiation"/>
    <property type="evidence" value="ECO:0000316"/>
    <property type="project" value="MGI"/>
</dbReference>
<dbReference type="GO" id="GO:0045944">
    <property type="term" value="P:positive regulation of transcription by RNA polymerase II"/>
    <property type="evidence" value="ECO:0000316"/>
    <property type="project" value="MGI"/>
</dbReference>
<dbReference type="FunFam" id="1.10.720.30:FF:000016">
    <property type="entry name" value="MEF2-activating motif and SAP domain-containing transcriptional regulator isoform X2"/>
    <property type="match status" value="1"/>
</dbReference>
<dbReference type="Gene3D" id="1.10.720.30">
    <property type="entry name" value="SAP domain"/>
    <property type="match status" value="1"/>
</dbReference>
<dbReference type="InterPro" id="IPR003034">
    <property type="entry name" value="SAP_dom"/>
</dbReference>
<dbReference type="InterPro" id="IPR036361">
    <property type="entry name" value="SAP_dom_sf"/>
</dbReference>
<dbReference type="InterPro" id="IPR052305">
    <property type="entry name" value="TransReg_TumorExp"/>
</dbReference>
<dbReference type="PANTHER" id="PTHR23251">
    <property type="entry name" value="LYSINE-RICH CEACAM1 CO-ISOLATED PROTEIN LYRIC PROTEIN"/>
    <property type="match status" value="1"/>
</dbReference>
<dbReference type="PANTHER" id="PTHR23251:SF1">
    <property type="entry name" value="MEF2-ACTIVATING MOTIF AND SAP DOMAIN-CONTAINING TRANSCRIPTIONAL REGULATOR"/>
    <property type="match status" value="1"/>
</dbReference>
<dbReference type="Pfam" id="PF02037">
    <property type="entry name" value="SAP"/>
    <property type="match status" value="1"/>
</dbReference>
<dbReference type="SMART" id="SM00513">
    <property type="entry name" value="SAP"/>
    <property type="match status" value="1"/>
</dbReference>
<dbReference type="SUPFAM" id="SSF68906">
    <property type="entry name" value="SAP domain"/>
    <property type="match status" value="1"/>
</dbReference>
<dbReference type="PROSITE" id="PS50800">
    <property type="entry name" value="SAP"/>
    <property type="match status" value="1"/>
</dbReference>
<evidence type="ECO:0000250" key="1"/>
<evidence type="ECO:0000255" key="2">
    <source>
        <dbReference type="PROSITE-ProRule" id="PRU00186"/>
    </source>
</evidence>
<evidence type="ECO:0000256" key="3">
    <source>
        <dbReference type="SAM" id="MobiDB-lite"/>
    </source>
</evidence>
<evidence type="ECO:0000269" key="4">
    <source>
    </source>
</evidence>
<evidence type="ECO:0000303" key="5">
    <source>
    </source>
</evidence>
<evidence type="ECO:0000305" key="6"/>
<comment type="function">
    <text evidence="4">Transcriptional coactivator. Stimulates the transcriptional activity of MEF2C. Stimulates MYOD1 activity in part via MEF2, resulting in an enhancement of skeletal muscle differentiation.</text>
</comment>
<comment type="subunit">
    <text evidence="4">Interacts with MEF2C.</text>
</comment>
<comment type="subcellular location">
    <subcellularLocation>
        <location evidence="4">Nucleus</location>
    </subcellularLocation>
</comment>
<comment type="alternative products">
    <event type="alternative splicing"/>
    <isoform>
        <id>Q0ZCJ7-1</id>
        <name>1</name>
        <sequence type="displayed"/>
    </isoform>
    <isoform>
        <id>Q0ZCJ7-2</id>
        <name>2</name>
        <sequence type="described" ref="VSP_031556 VSP_031557"/>
    </isoform>
</comment>
<comment type="tissue specificity">
    <text evidence="4">Expressed in skeletal muscle, brain, placenta and spleen.</text>
</comment>